<dbReference type="EMBL" id="J03732">
    <property type="protein sequence ID" value="AAA23469.1"/>
    <property type="molecule type" value="Genomic_DNA"/>
</dbReference>
<dbReference type="EMBL" id="U29581">
    <property type="protein sequence ID" value="AAB40488.1"/>
    <property type="molecule type" value="Genomic_DNA"/>
</dbReference>
<dbReference type="EMBL" id="X00272">
    <property type="protein sequence ID" value="CAA25075.1"/>
    <property type="molecule type" value="Genomic_DNA"/>
</dbReference>
<dbReference type="EMBL" id="U00096">
    <property type="protein sequence ID" value="AAC75880.1"/>
    <property type="molecule type" value="Genomic_DNA"/>
</dbReference>
<dbReference type="EMBL" id="AP009048">
    <property type="protein sequence ID" value="BAE76910.1"/>
    <property type="molecule type" value="Genomic_DNA"/>
</dbReference>
<dbReference type="PIR" id="B26430">
    <property type="entry name" value="B26430"/>
</dbReference>
<dbReference type="RefSeq" id="NP_417318.1">
    <property type="nucleotide sequence ID" value="NC_000913.3"/>
</dbReference>
<dbReference type="RefSeq" id="WP_000256438.1">
    <property type="nucleotide sequence ID" value="NZ_SSUV01000026.1"/>
</dbReference>
<dbReference type="SMR" id="P0AE24"/>
<dbReference type="BioGRID" id="4259474">
    <property type="interactions" value="16"/>
</dbReference>
<dbReference type="FunCoup" id="P0AE24">
    <property type="interactions" value="638"/>
</dbReference>
<dbReference type="STRING" id="511145.b2841"/>
<dbReference type="TCDB" id="2.A.1.1.2">
    <property type="family name" value="the major facilitator superfamily (mfs)"/>
</dbReference>
<dbReference type="PaxDb" id="511145-b2841"/>
<dbReference type="EnsemblBacteria" id="AAC75880">
    <property type="protein sequence ID" value="AAC75880"/>
    <property type="gene ID" value="b2841"/>
</dbReference>
<dbReference type="GeneID" id="93779155"/>
<dbReference type="GeneID" id="947341"/>
<dbReference type="KEGG" id="ecj:JW2809"/>
<dbReference type="KEGG" id="eco:b2841"/>
<dbReference type="KEGG" id="ecoc:C3026_15600"/>
<dbReference type="PATRIC" id="fig|1411691.4.peg.3893"/>
<dbReference type="EchoBASE" id="EB0054"/>
<dbReference type="eggNOG" id="COG2814">
    <property type="taxonomic scope" value="Bacteria"/>
</dbReference>
<dbReference type="HOGENOM" id="CLU_001265_30_5_6"/>
<dbReference type="InParanoid" id="P0AE24"/>
<dbReference type="OMA" id="ETGWRWM"/>
<dbReference type="OrthoDB" id="5368493at2"/>
<dbReference type="PhylomeDB" id="P0AE24"/>
<dbReference type="BioCyc" id="EcoCyc:ARAE-MONOMER"/>
<dbReference type="BioCyc" id="MetaCyc:ARAE-MONOMER"/>
<dbReference type="PRO" id="PR:P0AE24"/>
<dbReference type="Proteomes" id="UP000000625">
    <property type="component" value="Chromosome"/>
</dbReference>
<dbReference type="GO" id="GO:0016020">
    <property type="term" value="C:membrane"/>
    <property type="evidence" value="ECO:0000318"/>
    <property type="project" value="GO_Central"/>
</dbReference>
<dbReference type="GO" id="GO:0005886">
    <property type="term" value="C:plasma membrane"/>
    <property type="evidence" value="ECO:0000314"/>
    <property type="project" value="EcoCyc"/>
</dbReference>
<dbReference type="GO" id="GO:0015150">
    <property type="term" value="F:fucose transmembrane transporter activity"/>
    <property type="evidence" value="ECO:0000314"/>
    <property type="project" value="EcoCyc"/>
</dbReference>
<dbReference type="GO" id="GO:0015147">
    <property type="term" value="F:L-arabinose transmembrane transporter activity"/>
    <property type="evidence" value="ECO:0000314"/>
    <property type="project" value="EcoCyc"/>
</dbReference>
<dbReference type="GO" id="GO:0015293">
    <property type="term" value="F:symporter activity"/>
    <property type="evidence" value="ECO:0000315"/>
    <property type="project" value="EcoCyc"/>
</dbReference>
<dbReference type="GO" id="GO:0015756">
    <property type="term" value="P:fucose transmembrane transport"/>
    <property type="evidence" value="ECO:0000314"/>
    <property type="project" value="EcoCyc"/>
</dbReference>
<dbReference type="GO" id="GO:0042882">
    <property type="term" value="P:L-arabinose transmembrane transport"/>
    <property type="evidence" value="ECO:0000314"/>
    <property type="project" value="EcoCyc"/>
</dbReference>
<dbReference type="GO" id="GO:0055085">
    <property type="term" value="P:transmembrane transport"/>
    <property type="evidence" value="ECO:0000318"/>
    <property type="project" value="GO_Central"/>
</dbReference>
<dbReference type="CDD" id="cd17315">
    <property type="entry name" value="MFS_GLUT_like"/>
    <property type="match status" value="1"/>
</dbReference>
<dbReference type="FunFam" id="1.20.1250.20:FF:000008">
    <property type="entry name" value="Galactose-proton symporter (Galactose transporter)"/>
    <property type="match status" value="1"/>
</dbReference>
<dbReference type="Gene3D" id="1.20.1250.20">
    <property type="entry name" value="MFS general substrate transporter like domains"/>
    <property type="match status" value="1"/>
</dbReference>
<dbReference type="InterPro" id="IPR020846">
    <property type="entry name" value="MFS_dom"/>
</dbReference>
<dbReference type="InterPro" id="IPR005828">
    <property type="entry name" value="MFS_sugar_transport-like"/>
</dbReference>
<dbReference type="InterPro" id="IPR036259">
    <property type="entry name" value="MFS_trans_sf"/>
</dbReference>
<dbReference type="InterPro" id="IPR050814">
    <property type="entry name" value="Myo-inositol_Transporter"/>
</dbReference>
<dbReference type="InterPro" id="IPR003663">
    <property type="entry name" value="Sugar/inositol_transpt"/>
</dbReference>
<dbReference type="InterPro" id="IPR005829">
    <property type="entry name" value="Sugar_transporter_CS"/>
</dbReference>
<dbReference type="NCBIfam" id="TIGR00879">
    <property type="entry name" value="SP"/>
    <property type="match status" value="1"/>
</dbReference>
<dbReference type="PANTHER" id="PTHR48020">
    <property type="entry name" value="PROTON MYO-INOSITOL COTRANSPORTER"/>
    <property type="match status" value="1"/>
</dbReference>
<dbReference type="PANTHER" id="PTHR48020:SF12">
    <property type="entry name" value="PROTON MYO-INOSITOL COTRANSPORTER"/>
    <property type="match status" value="1"/>
</dbReference>
<dbReference type="Pfam" id="PF00083">
    <property type="entry name" value="Sugar_tr"/>
    <property type="match status" value="1"/>
</dbReference>
<dbReference type="PRINTS" id="PR00171">
    <property type="entry name" value="SUGRTRNSPORT"/>
</dbReference>
<dbReference type="SUPFAM" id="SSF103473">
    <property type="entry name" value="MFS general substrate transporter"/>
    <property type="match status" value="1"/>
</dbReference>
<dbReference type="PROSITE" id="PS50850">
    <property type="entry name" value="MFS"/>
    <property type="match status" value="1"/>
</dbReference>
<dbReference type="PROSITE" id="PS00216">
    <property type="entry name" value="SUGAR_TRANSPORT_1"/>
    <property type="match status" value="1"/>
</dbReference>
<dbReference type="PROSITE" id="PS00217">
    <property type="entry name" value="SUGAR_TRANSPORT_2"/>
    <property type="match status" value="1"/>
</dbReference>
<reference key="1">
    <citation type="journal article" date="1987" name="Nature">
        <title>Mammalian and bacterial sugar transport proteins are homologous.</title>
        <authorList>
            <person name="Maiden M.C.J."/>
            <person name="Davis E.O."/>
            <person name="Baldwin S.A."/>
            <person name="Moore D.C.M."/>
            <person name="Henderson P.J.F."/>
        </authorList>
    </citation>
    <scope>NUCLEOTIDE SEQUENCE [GENOMIC DNA]</scope>
</reference>
<reference key="2">
    <citation type="journal article" date="1988" name="J. Biol. Chem.">
        <title>The cloning, DNA sequence, and overexpression of the gene araE coding for arabinose-proton symport in Escherichia coli K12.</title>
        <authorList>
            <person name="Maiden M.C.J."/>
            <person name="Jones-Mortimer M.C."/>
            <person name="Henderson P.J.F."/>
        </authorList>
    </citation>
    <scope>NUCLEOTIDE SEQUENCE [GENOMIC DNA]</scope>
    <scope>FUNCTION</scope>
    <scope>CATALYTIC ACTIVITY</scope>
    <scope>SUBCELLULAR LOCATION</scope>
    <source>
        <strain>K12 / JM2433</strain>
    </source>
</reference>
<reference key="3">
    <citation type="journal article" date="1997" name="Science">
        <title>The complete genome sequence of Escherichia coli K-12.</title>
        <authorList>
            <person name="Blattner F.R."/>
            <person name="Plunkett G. III"/>
            <person name="Bloch C.A."/>
            <person name="Perna N.T."/>
            <person name="Burland V."/>
            <person name="Riley M."/>
            <person name="Collado-Vides J."/>
            <person name="Glasner J.D."/>
            <person name="Rode C.K."/>
            <person name="Mayhew G.F."/>
            <person name="Gregor J."/>
            <person name="Davis N.W."/>
            <person name="Kirkpatrick H.A."/>
            <person name="Goeden M.A."/>
            <person name="Rose D.J."/>
            <person name="Mau B."/>
            <person name="Shao Y."/>
        </authorList>
    </citation>
    <scope>NUCLEOTIDE SEQUENCE [LARGE SCALE GENOMIC DNA]</scope>
    <source>
        <strain>K12 / MG1655 / ATCC 47076</strain>
    </source>
</reference>
<reference key="4">
    <citation type="journal article" date="2006" name="Mol. Syst. Biol.">
        <title>Highly accurate genome sequences of Escherichia coli K-12 strains MG1655 and W3110.</title>
        <authorList>
            <person name="Hayashi K."/>
            <person name="Morooka N."/>
            <person name="Yamamoto Y."/>
            <person name="Fujita K."/>
            <person name="Isono K."/>
            <person name="Choi S."/>
            <person name="Ohtsubo E."/>
            <person name="Baba T."/>
            <person name="Wanner B.L."/>
            <person name="Mori H."/>
            <person name="Horiuchi T."/>
        </authorList>
    </citation>
    <scope>NUCLEOTIDE SEQUENCE [LARGE SCALE GENOMIC DNA]</scope>
    <source>
        <strain>K12 / W3110 / ATCC 27325 / DSM 5911</strain>
    </source>
</reference>
<reference key="5">
    <citation type="journal article" date="1983" name="J. Mol. Biol.">
        <title>The araE low affinity L-arabinose transport promoter. Cloning, sequence, transcription start site and DNA binding sites of regulatory proteins.</title>
        <authorList>
            <person name="Stoner C."/>
            <person name="Schleif R.F."/>
        </authorList>
    </citation>
    <scope>PRELIMINARY NUCLEOTIDE SEQUENCE [GENOMIC DNA] OF 1-28</scope>
    <scope>INDUCTION</scope>
</reference>
<reference key="6">
    <citation type="journal article" date="1981" name="Biochem. J.">
        <title>Identification of the AraE transport protein of Escherichia coli.</title>
        <authorList>
            <person name="MacPherson A.J."/>
            <person name="Jones-Mortimer M.C."/>
            <person name="Henderson P.J."/>
        </authorList>
    </citation>
    <scope>FUNCTION</scope>
    <scope>ACTIVITY REGULATION</scope>
    <scope>SUBCELLULAR LOCATION</scope>
</reference>
<reference key="7">
    <citation type="journal article" date="1981" name="Biochem. J.">
        <title>Energization of the transport systems for arabinose and comparison with galactose transport in Escherichia coli.</title>
        <authorList>
            <person name="Daruwalla K.R."/>
            <person name="Paxton A.T."/>
            <person name="Henderson P.J."/>
        </authorList>
    </citation>
    <scope>FUNCTION</scope>
    <scope>CATALYTIC ACTIVITY</scope>
    <scope>BIOPHYSICOCHEMICAL PROPERTIES</scope>
    <scope>ACTIVITY REGULATION</scope>
    <scope>INDUCTION</scope>
</reference>
<reference key="8">
    <citation type="journal article" date="2005" name="Science">
        <title>Global topology analysis of the Escherichia coli inner membrane proteome.</title>
        <authorList>
            <person name="Daley D.O."/>
            <person name="Rapp M."/>
            <person name="Granseth E."/>
            <person name="Melen K."/>
            <person name="Drew D."/>
            <person name="von Heijne G."/>
        </authorList>
    </citation>
    <scope>TOPOLOGY [LARGE SCALE ANALYSIS]</scope>
    <source>
        <strain>K12 / MG1655 / ATCC 47076</strain>
    </source>
</reference>
<sequence length="472" mass="51684">MVTINTESALTPRSLRDTRRMNMFVSVAAAVAGLLFGLDIGVIAGALPFITDHFVLTSRLQEWVVSSMMLGAAIGALFNGWLSFRLGRKYSLMAGAILFVLGSIGSAFATSVEMLIAARVVLGIAVGIASYTAPLYLSEMASENVRGKMISMYQLMVTLGIVLAFLSDTAFSYSGNWRAMLGVLALPAVLLIILVVFLPNSPRWLAEKGRHIEAEEVLRMLRDTSEKAREELNEIRESLKLKQGGWALFKINRNVRRAVFLGMLLQAMQQFTGMNIIMYYAPRIFKMAGFTTTEQQMIATLVVGLTFMFATFIAVFTVDKAGRKPALKIGFSVMALGTLVLGYCLMQFDNGTASSGLSWLSVGMTMMCIAGYAMSAAPVVWILCSEIQPLKCRDFGITCSTTTNWVSNMIIGATFLTLLDSIGAAGTFWLYTALNIAFVGITFWLIPETKNVTLEHIERKLMAGEKLRNIGV</sequence>
<gene>
    <name type="primary">araE</name>
    <name type="ordered locus">b2841</name>
    <name type="ordered locus">JW2809</name>
</gene>
<name>ARAE_ECOLI</name>
<feature type="chain" id="PRO_0000050289" description="Arabinose-proton symporter">
    <location>
        <begin position="1"/>
        <end position="472"/>
    </location>
</feature>
<feature type="topological domain" description="Cytoplasmic" evidence="7">
    <location>
        <begin position="1"/>
        <end position="29"/>
    </location>
</feature>
<feature type="transmembrane region" description="Helical" evidence="1">
    <location>
        <begin position="30"/>
        <end position="50"/>
    </location>
</feature>
<feature type="topological domain" description="Periplasmic" evidence="7">
    <location>
        <begin position="51"/>
        <end position="63"/>
    </location>
</feature>
<feature type="transmembrane region" description="Helical" evidence="1">
    <location>
        <begin position="64"/>
        <end position="84"/>
    </location>
</feature>
<feature type="topological domain" description="Cytoplasmic" evidence="7">
    <location>
        <begin position="85"/>
        <end position="91"/>
    </location>
</feature>
<feature type="transmembrane region" description="Helical" evidence="1">
    <location>
        <begin position="92"/>
        <end position="112"/>
    </location>
</feature>
<feature type="topological domain" description="Periplasmic" evidence="7">
    <location>
        <begin position="113"/>
        <end position="114"/>
    </location>
</feature>
<feature type="transmembrane region" description="Helical" evidence="1">
    <location>
        <begin position="115"/>
        <end position="135"/>
    </location>
</feature>
<feature type="topological domain" description="Cytoplasmic" evidence="7">
    <location>
        <begin position="136"/>
        <end position="154"/>
    </location>
</feature>
<feature type="transmembrane region" description="Helical" evidence="1">
    <location>
        <begin position="155"/>
        <end position="175"/>
    </location>
</feature>
<feature type="topological domain" description="Periplasmic" evidence="7">
    <location>
        <begin position="176"/>
        <end position="178"/>
    </location>
</feature>
<feature type="transmembrane region" description="Helical" evidence="1">
    <location>
        <begin position="179"/>
        <end position="199"/>
    </location>
</feature>
<feature type="topological domain" description="Cytoplasmic" evidence="7">
    <location>
        <begin position="200"/>
        <end position="257"/>
    </location>
</feature>
<feature type="transmembrane region" description="Helical" evidence="1">
    <location>
        <begin position="258"/>
        <end position="278"/>
    </location>
</feature>
<feature type="topological domain" description="Periplasmic" evidence="7">
    <location>
        <begin position="279"/>
        <end position="297"/>
    </location>
</feature>
<feature type="transmembrane region" description="Helical" evidence="1">
    <location>
        <begin position="298"/>
        <end position="318"/>
    </location>
</feature>
<feature type="topological domain" description="Cytoplasmic" evidence="7">
    <location>
        <begin position="319"/>
        <end position="325"/>
    </location>
</feature>
<feature type="transmembrane region" description="Helical" evidence="1">
    <location>
        <begin position="326"/>
        <end position="346"/>
    </location>
</feature>
<feature type="topological domain" description="Periplasmic" evidence="7">
    <location>
        <begin position="347"/>
        <end position="361"/>
    </location>
</feature>
<feature type="transmembrane region" description="Helical" evidence="1">
    <location>
        <begin position="362"/>
        <end position="382"/>
    </location>
</feature>
<feature type="topological domain" description="Cytoplasmic" evidence="7">
    <location>
        <begin position="383"/>
        <end position="404"/>
    </location>
</feature>
<feature type="transmembrane region" description="Helical" evidence="1">
    <location>
        <begin position="405"/>
        <end position="425"/>
    </location>
</feature>
<feature type="transmembrane region" description="Helical" evidence="1">
    <location>
        <begin position="426"/>
        <end position="446"/>
    </location>
</feature>
<feature type="topological domain" description="Cytoplasmic" evidence="2">
    <location>
        <begin position="447"/>
        <end position="472"/>
    </location>
</feature>
<feature type="sequence conflict" description="In Ref. 5; CAA25075." evidence="7" ref="5">
    <original>SVA</original>
    <variation>YDR</variation>
    <location>
        <begin position="26"/>
        <end position="28"/>
    </location>
</feature>
<evidence type="ECO:0000255" key="1"/>
<evidence type="ECO:0000269" key="2">
    <source>
    </source>
</evidence>
<evidence type="ECO:0000269" key="3">
    <source>
    </source>
</evidence>
<evidence type="ECO:0000269" key="4">
    <source>
    </source>
</evidence>
<evidence type="ECO:0000269" key="5">
    <source>
    </source>
</evidence>
<evidence type="ECO:0000269" key="6">
    <source>
    </source>
</evidence>
<evidence type="ECO:0000305" key="7"/>
<accession>P0AE24</accession>
<accession>P09830</accession>
<accession>Q2M9Z6</accession>
<accession>Q46937</accession>
<keyword id="KW-0997">Cell inner membrane</keyword>
<keyword id="KW-1003">Cell membrane</keyword>
<keyword id="KW-0472">Membrane</keyword>
<keyword id="KW-1185">Reference proteome</keyword>
<keyword id="KW-0762">Sugar transport</keyword>
<keyword id="KW-0769">Symport</keyword>
<keyword id="KW-0812">Transmembrane</keyword>
<keyword id="KW-1133">Transmembrane helix</keyword>
<keyword id="KW-0813">Transport</keyword>
<protein>
    <recommendedName>
        <fullName evidence="7">Arabinose-proton symporter</fullName>
    </recommendedName>
    <alternativeName>
        <fullName evidence="7">Arabinose transporter</fullName>
    </alternativeName>
</protein>
<comment type="function">
    <text evidence="3 4 6">Uptake of L-arabinose across the cytoplasmic membrane with the concomitant transport of protons into the cell (symport system) (PubMed:2836407, PubMed:6282256, PubMed:7030324). D-fucose, a nonmetabolizable analog of L-arabinose, is also a good substrate (PubMed:6282256).</text>
</comment>
<comment type="catalytic activity">
    <reaction evidence="3 4">
        <text>L-arabinose(in) + H(+)(in) = L-arabinose(out) + H(+)(out)</text>
        <dbReference type="Rhea" id="RHEA:28951"/>
        <dbReference type="ChEBI" id="CHEBI:15378"/>
        <dbReference type="ChEBI" id="CHEBI:17535"/>
    </reaction>
    <physiologicalReaction direction="right-to-left" evidence="3 4">
        <dbReference type="Rhea" id="RHEA:28953"/>
    </physiologicalReaction>
</comment>
<comment type="catalytic activity">
    <reaction evidence="4">
        <text>D-fucose(in) + H(+)(in) = D-fucose(out) + H(+)(out)</text>
        <dbReference type="Rhea" id="RHEA:35011"/>
        <dbReference type="ChEBI" id="CHEBI:2179"/>
        <dbReference type="ChEBI" id="CHEBI:15378"/>
    </reaction>
</comment>
<comment type="activity regulation">
    <text evidence="4 6">Symport activity is inhibited in the presence of the uncoupling agents carbonyl cyanide m-chlorophenylhydrazone (CCCP) and tetrachlorosalicylanilide and 2,4-dinitrophenol (PubMed:6282256). Activity is partially inhibited by N-ethylmaleimide (PubMed:7030324).</text>
</comment>
<comment type="biophysicochemical properties">
    <kinetics>
        <KM evidence="4">316.6 uM for arabinose (in membrane vesicles)</KM>
        <Vmax evidence="4">24.8 nmol/min/mg enzyme (in membrane vesicles)</Vmax>
    </kinetics>
</comment>
<comment type="subcellular location">
    <subcellularLocation>
        <location evidence="3 6">Cell inner membrane</location>
        <topology evidence="1">Multi-pass membrane protein</topology>
    </subcellularLocation>
</comment>
<comment type="induction">
    <text evidence="4 5">Induced by arabinose (PubMed:6282256, PubMed:6319708). Transcription is dependent on the transcription factor AraC, the cAMP receptor protein (CRP) and cAMP (PubMed:6319708).</text>
</comment>
<comment type="similarity">
    <text evidence="7">Belongs to the major facilitator superfamily. Sugar transporter (TC 2.A.1.1) family.</text>
</comment>
<organism>
    <name type="scientific">Escherichia coli (strain K12)</name>
    <dbReference type="NCBI Taxonomy" id="83333"/>
    <lineage>
        <taxon>Bacteria</taxon>
        <taxon>Pseudomonadati</taxon>
        <taxon>Pseudomonadota</taxon>
        <taxon>Gammaproteobacteria</taxon>
        <taxon>Enterobacterales</taxon>
        <taxon>Enterobacteriaceae</taxon>
        <taxon>Escherichia</taxon>
    </lineage>
</organism>
<proteinExistence type="evidence at protein level"/>